<name>NIFH2_METBA</name>
<gene>
    <name type="primary">nifH2</name>
</gene>
<sequence length="273" mass="29346">MRQIAIYGKGGIGKSTTTQNLTASLSTMGNKIMLVGCDPKADSTRMLLGGLNQKTVLDTLRSEGDEGVDLDVVMQRGFGDIKCVESGGPEPGVGCAGRGIITSIGLLENLGAYTDDLDYVFYDVLGDVVCGGFAMPIREGKAKEIYIVASGELMAIYAANNICKGLAKFAKGGARLGGIICNSRNVDGERELLDAFAKKLGSHLIHFIPRDNIVQRAEINRKTVIDFDPESNQAKEYLTLAHNVQNNDKLVVPTPLPMEELEAMMVEFGIVDL</sequence>
<reference key="1">
    <citation type="journal article" date="1991" name="Res. Microbiol.">
        <title>Nucleotide sequence of nifH regions from Methanobacterium ivanovii and Methanosarcina barkeri 227 and characterization of glnB-like genes.</title>
        <authorList>
            <person name="Sibold L."/>
            <person name="Henriquet M."/>
            <person name="Possot O."/>
            <person name="Aubert J.-P."/>
        </authorList>
    </citation>
    <scope>NUCLEOTIDE SEQUENCE [GENOMIC DNA]</scope>
    <source>
        <strain>ATCC 43241 / DSM 1538 / 227</strain>
    </source>
</reference>
<reference key="2">
    <citation type="journal article" date="1994" name="J. Bacteriol.">
        <title>Cloning, DNA sequencing, and characterization of a nifD-homologous gene from the archaeon Methanosarcina barkeri 227 which resembles nifD1 from the eubacterium Clostridium pasteurianum.</title>
        <authorList>
            <person name="Chien Y.-T."/>
            <person name="Zinder S.H."/>
        </authorList>
    </citation>
    <scope>SEQUENCE REVISION TO 11-13</scope>
    <source>
        <strain>ATCC 43241 / DSM 1538 / 227</strain>
    </source>
</reference>
<keyword id="KW-0004">4Fe-4S</keyword>
<keyword id="KW-0013">ADP-ribosylation</keyword>
<keyword id="KW-0067">ATP-binding</keyword>
<keyword id="KW-0408">Iron</keyword>
<keyword id="KW-0411">Iron-sulfur</keyword>
<keyword id="KW-0479">Metal-binding</keyword>
<keyword id="KW-0535">Nitrogen fixation</keyword>
<keyword id="KW-0547">Nucleotide-binding</keyword>
<keyword id="KW-0560">Oxidoreductase</keyword>
<proteinExistence type="inferred from homology"/>
<feature type="chain" id="PRO_0000139536" description="Nitrogenase iron protein 2">
    <location>
        <begin position="1"/>
        <end position="273"/>
    </location>
</feature>
<feature type="binding site" evidence="2">
    <location>
        <begin position="8"/>
        <end position="15"/>
    </location>
    <ligand>
        <name>ATP</name>
        <dbReference type="ChEBI" id="CHEBI:30616"/>
    </ligand>
</feature>
<feature type="binding site" evidence="1">
    <location>
        <position position="95"/>
    </location>
    <ligand>
        <name>[4Fe-4S] cluster</name>
        <dbReference type="ChEBI" id="CHEBI:49883"/>
        <note>ligand shared between dimeric partners</note>
    </ligand>
</feature>
<feature type="binding site" evidence="1">
    <location>
        <position position="130"/>
    </location>
    <ligand>
        <name>[4Fe-4S] cluster</name>
        <dbReference type="ChEBI" id="CHEBI:49883"/>
        <note>ligand shared between dimeric partners</note>
    </ligand>
</feature>
<feature type="modified residue" description="ADP-ribosylarginine; by dinitrogenase reductase ADP-ribosyltransferase" evidence="1">
    <location>
        <position position="98"/>
    </location>
</feature>
<feature type="sequence conflict" description="In Ref. 1." evidence="3" ref="1">
    <original>GIG</original>
    <variation>WELE</variation>
    <location>
        <begin position="11"/>
        <end position="13"/>
    </location>
</feature>
<protein>
    <recommendedName>
        <fullName>Nitrogenase iron protein 2</fullName>
        <ecNumber>1.18.6.1</ecNumber>
    </recommendedName>
    <alternativeName>
        <fullName>Nitrogenase Fe protein 2</fullName>
    </alternativeName>
    <alternativeName>
        <fullName>Nitrogenase component II</fullName>
    </alternativeName>
    <alternativeName>
        <fullName>Nitrogenase reductase</fullName>
    </alternativeName>
</protein>
<dbReference type="EC" id="1.18.6.1"/>
<dbReference type="EMBL" id="X56073">
    <property type="protein sequence ID" value="CAA39556.1"/>
    <property type="molecule type" value="Genomic_DNA"/>
</dbReference>
<dbReference type="SMR" id="P54800"/>
<dbReference type="GO" id="GO:0051539">
    <property type="term" value="F:4 iron, 4 sulfur cluster binding"/>
    <property type="evidence" value="ECO:0007669"/>
    <property type="project" value="UniProtKB-KW"/>
</dbReference>
<dbReference type="GO" id="GO:0005524">
    <property type="term" value="F:ATP binding"/>
    <property type="evidence" value="ECO:0007669"/>
    <property type="project" value="UniProtKB-UniRule"/>
</dbReference>
<dbReference type="GO" id="GO:0046872">
    <property type="term" value="F:metal ion binding"/>
    <property type="evidence" value="ECO:0007669"/>
    <property type="project" value="UniProtKB-KW"/>
</dbReference>
<dbReference type="GO" id="GO:0016163">
    <property type="term" value="F:nitrogenase activity"/>
    <property type="evidence" value="ECO:0007669"/>
    <property type="project" value="UniProtKB-UniRule"/>
</dbReference>
<dbReference type="GO" id="GO:0009399">
    <property type="term" value="P:nitrogen fixation"/>
    <property type="evidence" value="ECO:0007669"/>
    <property type="project" value="UniProtKB-UniRule"/>
</dbReference>
<dbReference type="CDD" id="cd02040">
    <property type="entry name" value="NifH"/>
    <property type="match status" value="1"/>
</dbReference>
<dbReference type="Gene3D" id="3.40.50.300">
    <property type="entry name" value="P-loop containing nucleotide triphosphate hydrolases"/>
    <property type="match status" value="1"/>
</dbReference>
<dbReference type="HAMAP" id="MF_00533">
    <property type="entry name" value="NifH"/>
    <property type="match status" value="1"/>
</dbReference>
<dbReference type="InterPro" id="IPR030655">
    <property type="entry name" value="NifH/chlL_CS"/>
</dbReference>
<dbReference type="InterPro" id="IPR000392">
    <property type="entry name" value="NifH/frxC"/>
</dbReference>
<dbReference type="InterPro" id="IPR005977">
    <property type="entry name" value="Nitrogenase_Fe_NifH"/>
</dbReference>
<dbReference type="InterPro" id="IPR027417">
    <property type="entry name" value="P-loop_NTPase"/>
</dbReference>
<dbReference type="NCBIfam" id="TIGR01287">
    <property type="entry name" value="nifH"/>
    <property type="match status" value="1"/>
</dbReference>
<dbReference type="PANTHER" id="PTHR42864">
    <property type="entry name" value="LIGHT-INDEPENDENT PROTOCHLOROPHYLLIDE REDUCTASE IRON-SULFUR ATP-BINDING PROTEIN"/>
    <property type="match status" value="1"/>
</dbReference>
<dbReference type="PANTHER" id="PTHR42864:SF2">
    <property type="entry name" value="LIGHT-INDEPENDENT PROTOCHLOROPHYLLIDE REDUCTASE IRON-SULFUR ATP-BINDING PROTEIN"/>
    <property type="match status" value="1"/>
</dbReference>
<dbReference type="Pfam" id="PF00142">
    <property type="entry name" value="Fer4_NifH"/>
    <property type="match status" value="1"/>
</dbReference>
<dbReference type="PIRSF" id="PIRSF000363">
    <property type="entry name" value="Nitrogenase_iron"/>
    <property type="match status" value="1"/>
</dbReference>
<dbReference type="PRINTS" id="PR00091">
    <property type="entry name" value="NITROGNASEII"/>
</dbReference>
<dbReference type="SUPFAM" id="SSF52540">
    <property type="entry name" value="P-loop containing nucleoside triphosphate hydrolases"/>
    <property type="match status" value="1"/>
</dbReference>
<dbReference type="PROSITE" id="PS00746">
    <property type="entry name" value="NIFH_FRXC_1"/>
    <property type="match status" value="1"/>
</dbReference>
<dbReference type="PROSITE" id="PS00692">
    <property type="entry name" value="NIFH_FRXC_2"/>
    <property type="match status" value="1"/>
</dbReference>
<dbReference type="PROSITE" id="PS51026">
    <property type="entry name" value="NIFH_FRXC_3"/>
    <property type="match status" value="1"/>
</dbReference>
<organism>
    <name type="scientific">Methanosarcina barkeri</name>
    <dbReference type="NCBI Taxonomy" id="2208"/>
    <lineage>
        <taxon>Archaea</taxon>
        <taxon>Methanobacteriati</taxon>
        <taxon>Methanobacteriota</taxon>
        <taxon>Stenosarchaea group</taxon>
        <taxon>Methanomicrobia</taxon>
        <taxon>Methanosarcinales</taxon>
        <taxon>Methanosarcinaceae</taxon>
        <taxon>Methanosarcina</taxon>
    </lineage>
</organism>
<accession>P54800</accession>
<comment type="function">
    <text evidence="1">The key enzymatic reactions in nitrogen fixation are catalyzed by the nitrogenase complex, which has 2 components: the iron protein and the molybdenum-iron protein.</text>
</comment>
<comment type="catalytic activity">
    <reaction>
        <text>N2 + 8 reduced [2Fe-2S]-[ferredoxin] + 16 ATP + 16 H2O = H2 + 8 oxidized [2Fe-2S]-[ferredoxin] + 2 NH4(+) + 16 ADP + 16 phosphate + 6 H(+)</text>
        <dbReference type="Rhea" id="RHEA:21448"/>
        <dbReference type="Rhea" id="RHEA-COMP:10000"/>
        <dbReference type="Rhea" id="RHEA-COMP:10001"/>
        <dbReference type="ChEBI" id="CHEBI:15377"/>
        <dbReference type="ChEBI" id="CHEBI:15378"/>
        <dbReference type="ChEBI" id="CHEBI:17997"/>
        <dbReference type="ChEBI" id="CHEBI:18276"/>
        <dbReference type="ChEBI" id="CHEBI:28938"/>
        <dbReference type="ChEBI" id="CHEBI:30616"/>
        <dbReference type="ChEBI" id="CHEBI:33737"/>
        <dbReference type="ChEBI" id="CHEBI:33738"/>
        <dbReference type="ChEBI" id="CHEBI:43474"/>
        <dbReference type="ChEBI" id="CHEBI:456216"/>
        <dbReference type="EC" id="1.18.6.1"/>
    </reaction>
</comment>
<comment type="cofactor">
    <cofactor evidence="1">
        <name>[4Fe-4S] cluster</name>
        <dbReference type="ChEBI" id="CHEBI:49883"/>
    </cofactor>
    <text evidence="1">Binds 1 [4Fe-4S] cluster per dimer.</text>
</comment>
<comment type="subunit">
    <text evidence="1">Homodimer.</text>
</comment>
<comment type="PTM">
    <text evidence="1">The reversible ADP-ribosylation of Arg-98 inactivates the nitrogenase reductase and regulates nitrogenase activity.</text>
</comment>
<comment type="similarity">
    <text evidence="3">Belongs to the NifH/BchL/ChlL family.</text>
</comment>
<evidence type="ECO:0000250" key="1"/>
<evidence type="ECO:0000255" key="2"/>
<evidence type="ECO:0000305" key="3"/>